<organism>
    <name type="scientific">Pseudomonas putida (strain ATCC 47054 / DSM 6125 / CFBP 8728 / NCIMB 11950 / KT2440)</name>
    <dbReference type="NCBI Taxonomy" id="160488"/>
    <lineage>
        <taxon>Bacteria</taxon>
        <taxon>Pseudomonadati</taxon>
        <taxon>Pseudomonadota</taxon>
        <taxon>Gammaproteobacteria</taxon>
        <taxon>Pseudomonadales</taxon>
        <taxon>Pseudomonadaceae</taxon>
        <taxon>Pseudomonas</taxon>
    </lineage>
</organism>
<dbReference type="EMBL" id="AE015451">
    <property type="protein sequence ID" value="AAN68481.1"/>
    <property type="molecule type" value="Genomic_DNA"/>
</dbReference>
<dbReference type="RefSeq" id="NP_745017.1">
    <property type="nucleotide sequence ID" value="NC_002947.4"/>
</dbReference>
<dbReference type="RefSeq" id="WP_010953778.1">
    <property type="nucleotide sequence ID" value="NZ_CP169744.1"/>
</dbReference>
<dbReference type="SMR" id="Q88IX6"/>
<dbReference type="STRING" id="160488.PP_2873"/>
<dbReference type="PaxDb" id="160488-PP_2873"/>
<dbReference type="KEGG" id="ppu:PP_2873"/>
<dbReference type="PATRIC" id="fig|160488.4.peg.3045"/>
<dbReference type="eggNOG" id="COG0393">
    <property type="taxonomic scope" value="Bacteria"/>
</dbReference>
<dbReference type="HOGENOM" id="CLU_117144_3_2_6"/>
<dbReference type="OrthoDB" id="9796448at2"/>
<dbReference type="PhylomeDB" id="Q88IX6"/>
<dbReference type="BioCyc" id="PPUT160488:G1G01-3052-MONOMER"/>
<dbReference type="Proteomes" id="UP000000556">
    <property type="component" value="Chromosome"/>
</dbReference>
<dbReference type="Gene3D" id="3.30.110.70">
    <property type="entry name" value="Hypothetical protein apc22750. Chain B"/>
    <property type="match status" value="1"/>
</dbReference>
<dbReference type="HAMAP" id="MF_00338">
    <property type="entry name" value="UPF0145"/>
    <property type="match status" value="1"/>
</dbReference>
<dbReference type="InterPro" id="IPR035439">
    <property type="entry name" value="UPF0145_dom_sf"/>
</dbReference>
<dbReference type="InterPro" id="IPR002765">
    <property type="entry name" value="UPF0145_YbjQ-like"/>
</dbReference>
<dbReference type="PANTHER" id="PTHR34068">
    <property type="entry name" value="UPF0145 PROTEIN YBJQ"/>
    <property type="match status" value="1"/>
</dbReference>
<dbReference type="PANTHER" id="PTHR34068:SF1">
    <property type="entry name" value="UPF0145 PROTEIN YBJQ"/>
    <property type="match status" value="1"/>
</dbReference>
<dbReference type="Pfam" id="PF01906">
    <property type="entry name" value="YbjQ_1"/>
    <property type="match status" value="1"/>
</dbReference>
<dbReference type="SUPFAM" id="SSF117782">
    <property type="entry name" value="YbjQ-like"/>
    <property type="match status" value="1"/>
</dbReference>
<feature type="chain" id="PRO_0000138480" description="UPF0145 protein PP_2873">
    <location>
        <begin position="1"/>
        <end position="106"/>
    </location>
</feature>
<sequence>MIISTTSQLEGRPIAEYLGVVSSESVQGIYFVRDFFARFRDFFGGRSQTLESALREAREQATEELKARARQLQADAVVGVDFEISMPSVQGGMVVVFATGTAVRLK</sequence>
<proteinExistence type="inferred from homology"/>
<name>Y2873_PSEPK</name>
<keyword id="KW-1185">Reference proteome</keyword>
<gene>
    <name type="ordered locus">PP_2873</name>
</gene>
<comment type="similarity">
    <text evidence="1">Belongs to the UPF0145 family.</text>
</comment>
<protein>
    <recommendedName>
        <fullName evidence="1">UPF0145 protein PP_2873</fullName>
    </recommendedName>
</protein>
<reference key="1">
    <citation type="journal article" date="2002" name="Environ. Microbiol.">
        <title>Complete genome sequence and comparative analysis of the metabolically versatile Pseudomonas putida KT2440.</title>
        <authorList>
            <person name="Nelson K.E."/>
            <person name="Weinel C."/>
            <person name="Paulsen I.T."/>
            <person name="Dodson R.J."/>
            <person name="Hilbert H."/>
            <person name="Martins dos Santos V.A.P."/>
            <person name="Fouts D.E."/>
            <person name="Gill S.R."/>
            <person name="Pop M."/>
            <person name="Holmes M."/>
            <person name="Brinkac L.M."/>
            <person name="Beanan M.J."/>
            <person name="DeBoy R.T."/>
            <person name="Daugherty S.C."/>
            <person name="Kolonay J.F."/>
            <person name="Madupu R."/>
            <person name="Nelson W.C."/>
            <person name="White O."/>
            <person name="Peterson J.D."/>
            <person name="Khouri H.M."/>
            <person name="Hance I."/>
            <person name="Chris Lee P."/>
            <person name="Holtzapple E.K."/>
            <person name="Scanlan D."/>
            <person name="Tran K."/>
            <person name="Moazzez A."/>
            <person name="Utterback T.R."/>
            <person name="Rizzo M."/>
            <person name="Lee K."/>
            <person name="Kosack D."/>
            <person name="Moestl D."/>
            <person name="Wedler H."/>
            <person name="Lauber J."/>
            <person name="Stjepandic D."/>
            <person name="Hoheisel J."/>
            <person name="Straetz M."/>
            <person name="Heim S."/>
            <person name="Kiewitz C."/>
            <person name="Eisen J.A."/>
            <person name="Timmis K.N."/>
            <person name="Duesterhoeft A."/>
            <person name="Tuemmler B."/>
            <person name="Fraser C.M."/>
        </authorList>
    </citation>
    <scope>NUCLEOTIDE SEQUENCE [LARGE SCALE GENOMIC DNA]</scope>
    <source>
        <strain>ATCC 47054 / DSM 6125 / CFBP 8728 / NCIMB 11950 / KT2440</strain>
    </source>
</reference>
<evidence type="ECO:0000255" key="1">
    <source>
        <dbReference type="HAMAP-Rule" id="MF_00338"/>
    </source>
</evidence>
<accession>Q88IX6</accession>